<accession>B1L800</accession>
<gene>
    <name evidence="1" type="primary">rsmG</name>
    <name type="ordered locus">TRQ2_0221</name>
</gene>
<organism>
    <name type="scientific">Thermotoga sp. (strain RQ2)</name>
    <dbReference type="NCBI Taxonomy" id="126740"/>
    <lineage>
        <taxon>Bacteria</taxon>
        <taxon>Thermotogati</taxon>
        <taxon>Thermotogota</taxon>
        <taxon>Thermotogae</taxon>
        <taxon>Thermotogales</taxon>
        <taxon>Thermotogaceae</taxon>
        <taxon>Thermotoga</taxon>
    </lineage>
</organism>
<feature type="chain" id="PRO_0000342941" description="Ribosomal RNA small subunit methyltransferase G">
    <location>
        <begin position="1"/>
        <end position="228"/>
    </location>
</feature>
<feature type="binding site" evidence="1">
    <location>
        <position position="70"/>
    </location>
    <ligand>
        <name>S-adenosyl-L-methionine</name>
        <dbReference type="ChEBI" id="CHEBI:59789"/>
    </ligand>
</feature>
<feature type="binding site" evidence="1">
    <location>
        <begin position="121"/>
        <end position="122"/>
    </location>
    <ligand>
        <name>S-adenosyl-L-methionine</name>
        <dbReference type="ChEBI" id="CHEBI:59789"/>
    </ligand>
</feature>
<feature type="binding site" evidence="1">
    <location>
        <position position="138"/>
    </location>
    <ligand>
        <name>S-adenosyl-L-methionine</name>
        <dbReference type="ChEBI" id="CHEBI:59789"/>
    </ligand>
</feature>
<name>RSMG_THESQ</name>
<protein>
    <recommendedName>
        <fullName evidence="1">Ribosomal RNA small subunit methyltransferase G</fullName>
        <ecNumber evidence="1">2.1.1.-</ecNumber>
    </recommendedName>
    <alternativeName>
        <fullName evidence="1">16S rRNA 7-methylguanosine methyltransferase</fullName>
        <shortName evidence="1">16S rRNA m7G methyltransferase</shortName>
    </alternativeName>
</protein>
<keyword id="KW-0963">Cytoplasm</keyword>
<keyword id="KW-0489">Methyltransferase</keyword>
<keyword id="KW-0698">rRNA processing</keyword>
<keyword id="KW-0949">S-adenosyl-L-methionine</keyword>
<keyword id="KW-0808">Transferase</keyword>
<sequence length="228" mass="26068">MDSVKNILLEYGLRFQEPQIEKVDKYIEELLGVPYNLTAHRDLDSAVHKNVVEILLPLKEELKGTLLDVGSGNGVPGLILAIFFPKLKVVLLDSREKSVNFLRGVIEKLDLGNVSAVKERAENFSRERREEFDYVTARAVARLNVLVEICTPALKTGGKLLFYKGPSYIEELKEAQRAMKELKVELEEVREYSLKTGERRALLILRKYESSPEKYPRRVGVPFKRPLL</sequence>
<dbReference type="EC" id="2.1.1.-" evidence="1"/>
<dbReference type="EMBL" id="CP000969">
    <property type="protein sequence ID" value="ACB08581.1"/>
    <property type="molecule type" value="Genomic_DNA"/>
</dbReference>
<dbReference type="RefSeq" id="WP_012310400.1">
    <property type="nucleotide sequence ID" value="NC_010483.1"/>
</dbReference>
<dbReference type="SMR" id="B1L800"/>
<dbReference type="KEGG" id="trq:TRQ2_0221"/>
<dbReference type="HOGENOM" id="CLU_065341_0_1_0"/>
<dbReference type="Proteomes" id="UP000001687">
    <property type="component" value="Chromosome"/>
</dbReference>
<dbReference type="GO" id="GO:0005829">
    <property type="term" value="C:cytosol"/>
    <property type="evidence" value="ECO:0007669"/>
    <property type="project" value="TreeGrafter"/>
</dbReference>
<dbReference type="GO" id="GO:0070043">
    <property type="term" value="F:rRNA (guanine-N7-)-methyltransferase activity"/>
    <property type="evidence" value="ECO:0007669"/>
    <property type="project" value="UniProtKB-UniRule"/>
</dbReference>
<dbReference type="CDD" id="cd02440">
    <property type="entry name" value="AdoMet_MTases"/>
    <property type="match status" value="1"/>
</dbReference>
<dbReference type="Gene3D" id="3.40.50.150">
    <property type="entry name" value="Vaccinia Virus protein VP39"/>
    <property type="match status" value="1"/>
</dbReference>
<dbReference type="HAMAP" id="MF_00074">
    <property type="entry name" value="16SrRNA_methyltr_G"/>
    <property type="match status" value="1"/>
</dbReference>
<dbReference type="InterPro" id="IPR003682">
    <property type="entry name" value="rRNA_ssu_MeTfrase_G"/>
</dbReference>
<dbReference type="InterPro" id="IPR029063">
    <property type="entry name" value="SAM-dependent_MTases_sf"/>
</dbReference>
<dbReference type="NCBIfam" id="TIGR00138">
    <property type="entry name" value="rsmG_gidB"/>
    <property type="match status" value="1"/>
</dbReference>
<dbReference type="PANTHER" id="PTHR31760">
    <property type="entry name" value="S-ADENOSYL-L-METHIONINE-DEPENDENT METHYLTRANSFERASES SUPERFAMILY PROTEIN"/>
    <property type="match status" value="1"/>
</dbReference>
<dbReference type="PANTHER" id="PTHR31760:SF0">
    <property type="entry name" value="S-ADENOSYL-L-METHIONINE-DEPENDENT METHYLTRANSFERASES SUPERFAMILY PROTEIN"/>
    <property type="match status" value="1"/>
</dbReference>
<dbReference type="Pfam" id="PF02527">
    <property type="entry name" value="GidB"/>
    <property type="match status" value="1"/>
</dbReference>
<dbReference type="PIRSF" id="PIRSF003078">
    <property type="entry name" value="GidB"/>
    <property type="match status" value="1"/>
</dbReference>
<dbReference type="SUPFAM" id="SSF53335">
    <property type="entry name" value="S-adenosyl-L-methionine-dependent methyltransferases"/>
    <property type="match status" value="1"/>
</dbReference>
<comment type="function">
    <text evidence="1">Specifically methylates the N7 position of a guanine in 16S rRNA.</text>
</comment>
<comment type="subcellular location">
    <subcellularLocation>
        <location evidence="1">Cytoplasm</location>
    </subcellularLocation>
</comment>
<comment type="similarity">
    <text evidence="1">Belongs to the methyltransferase superfamily. RNA methyltransferase RsmG family.</text>
</comment>
<proteinExistence type="inferred from homology"/>
<reference key="1">
    <citation type="journal article" date="2011" name="J. Bacteriol.">
        <title>Genome sequence of Thermotoga sp. strain RQ2, a hyperthermophilic bacterium isolated from a geothermally heated region of the seafloor near Ribeira Quente, the Azores.</title>
        <authorList>
            <person name="Swithers K.S."/>
            <person name="DiPippo J.L."/>
            <person name="Bruce D.C."/>
            <person name="Detter C."/>
            <person name="Tapia R."/>
            <person name="Han S."/>
            <person name="Saunders E."/>
            <person name="Goodwin L.A."/>
            <person name="Han J."/>
            <person name="Woyke T."/>
            <person name="Pitluck S."/>
            <person name="Pennacchio L."/>
            <person name="Nolan M."/>
            <person name="Mikhailova N."/>
            <person name="Lykidis A."/>
            <person name="Land M.L."/>
            <person name="Brettin T."/>
            <person name="Stetter K.O."/>
            <person name="Nelson K.E."/>
            <person name="Gogarten J.P."/>
            <person name="Noll K.M."/>
        </authorList>
    </citation>
    <scope>NUCLEOTIDE SEQUENCE [LARGE SCALE GENOMIC DNA]</scope>
    <source>
        <strain>RQ2</strain>
    </source>
</reference>
<evidence type="ECO:0000255" key="1">
    <source>
        <dbReference type="HAMAP-Rule" id="MF_00074"/>
    </source>
</evidence>